<proteinExistence type="inferred from homology"/>
<name>OSPF_SHIBS</name>
<geneLocation type="plasmid">
    <name>pSB4_227</name>
</geneLocation>
<keyword id="KW-0456">Lyase</keyword>
<keyword id="KW-0614">Plasmid</keyword>
<keyword id="KW-0964">Secreted</keyword>
<keyword id="KW-0843">Virulence</keyword>
<comment type="function">
    <text evidence="1">Catalyzes the removal of the phosphate group from the phosphothreonine in the mitogen-activated protein kinases p38, phosphothreonine in the mitogen-activated protein kinases such as MAPK2/ERK2, MAPK3/ERK1, MAPK8 and MAPK14 in an irreversible reaction, thus preventing the downstream phosphorylation of histone H3. This epigenetic modification results in inhibition of the transcription of a specific subset of pro-inflammatory genes, and ultimately to a reduced immune response against the invading pathogen. The diminished immune response enhances the bacterium's ability to disseminate and multiply within the host (By similarity).</text>
</comment>
<comment type="subcellular location">
    <subcellularLocation>
        <location>Secreted</location>
    </subcellularLocation>
    <text evidence="1">Secreted via the type III secretion system (T3SS). Localizes in the nucleus of the infected cell (By similarity).</text>
</comment>
<comment type="similarity">
    <text evidence="2">Belongs to the phosphothreonine lyase family.</text>
</comment>
<reference key="1">
    <citation type="journal article" date="2005" name="Nucleic Acids Res.">
        <title>Genome dynamics and diversity of Shigella species, the etiologic agents of bacillary dysentery.</title>
        <authorList>
            <person name="Yang F."/>
            <person name="Yang J."/>
            <person name="Zhang X."/>
            <person name="Chen L."/>
            <person name="Jiang Y."/>
            <person name="Yan Y."/>
            <person name="Tang X."/>
            <person name="Wang J."/>
            <person name="Xiong Z."/>
            <person name="Dong J."/>
            <person name="Xue Y."/>
            <person name="Zhu Y."/>
            <person name="Xu X."/>
            <person name="Sun L."/>
            <person name="Chen S."/>
            <person name="Nie H."/>
            <person name="Peng J."/>
            <person name="Xu J."/>
            <person name="Wang Y."/>
            <person name="Yuan Z."/>
            <person name="Wen Y."/>
            <person name="Yao Z."/>
            <person name="Shen Y."/>
            <person name="Qiang B."/>
            <person name="Hou Y."/>
            <person name="Yu J."/>
            <person name="Jin Q."/>
        </authorList>
    </citation>
    <scope>NUCLEOTIDE SEQUENCE [LARGE SCALE GENOMIC DNA]</scope>
    <source>
        <strain>Sb227</strain>
    </source>
</reference>
<sequence>MPIKKPCLKLNLDSLNVVRSEIPQMLSANERLKNNFNILYNQIRQYPAYYFKVASNVPTYSDICQFFSVMYQGFQIVNHSGDVFIHACRENPQSKGDFVGDKFHISIAREQVPLAFQILSGLLFSEDSPIDKWKITDMNRVSQQSRVGIGAQFTLYVKSDQECSQYSALLLHKIRQFIMCLESNLLRSKIAPGEYPASDVRPEDWKYVSYRNELRSDRDGSERQEQMLREEPFYRLMIE</sequence>
<gene>
    <name type="primary">ospF</name>
    <name type="synonym">mkaD</name>
    <name type="ordered locus">SBO_P017</name>
</gene>
<organism>
    <name type="scientific">Shigella boydii serotype 4 (strain Sb227)</name>
    <dbReference type="NCBI Taxonomy" id="300268"/>
    <lineage>
        <taxon>Bacteria</taxon>
        <taxon>Pseudomonadati</taxon>
        <taxon>Pseudomonadota</taxon>
        <taxon>Gammaproteobacteria</taxon>
        <taxon>Enterobacterales</taxon>
        <taxon>Enterobacteriaceae</taxon>
        <taxon>Shigella</taxon>
    </lineage>
</organism>
<accession>Q31SR9</accession>
<evidence type="ECO:0000250" key="1"/>
<evidence type="ECO:0000305" key="2"/>
<feature type="chain" id="PRO_0000299351" description="Phosphothreonine lyase OspF">
    <location>
        <begin position="1"/>
        <end position="239"/>
    </location>
</feature>
<feature type="active site" description="Proton donor" evidence="1">
    <location>
        <position position="104"/>
    </location>
</feature>
<feature type="active site" description="Proton acceptor" evidence="1">
    <location>
        <position position="134"/>
    </location>
</feature>
<dbReference type="EC" id="4.2.3.-"/>
<dbReference type="EMBL" id="CP000037">
    <property type="protein sequence ID" value="ABB68889.1"/>
    <property type="molecule type" value="Genomic_DNA"/>
</dbReference>
<dbReference type="RefSeq" id="WP_001121865.1">
    <property type="nucleotide sequence ID" value="NC_007608.1"/>
</dbReference>
<dbReference type="SMR" id="Q31SR9"/>
<dbReference type="KEGG" id="sbo:SBO_P017"/>
<dbReference type="HOGENOM" id="CLU_100525_0_0_6"/>
<dbReference type="Proteomes" id="UP000007067">
    <property type="component" value="Plasmid pSB4_227"/>
</dbReference>
<dbReference type="GO" id="GO:0005576">
    <property type="term" value="C:extracellular region"/>
    <property type="evidence" value="ECO:0007669"/>
    <property type="project" value="UniProtKB-SubCell"/>
</dbReference>
<dbReference type="GO" id="GO:0016829">
    <property type="term" value="F:lyase activity"/>
    <property type="evidence" value="ECO:0007669"/>
    <property type="project" value="UniProtKB-KW"/>
</dbReference>
<dbReference type="Gene3D" id="3.30.2430.10">
    <property type="entry name" value="phosphothreonine lyase"/>
    <property type="match status" value="1"/>
</dbReference>
<dbReference type="InterPro" id="IPR003519">
    <property type="entry name" value="OspF/SpvC"/>
</dbReference>
<dbReference type="InterPro" id="IPR038498">
    <property type="entry name" value="OspF/SpvC_sf"/>
</dbReference>
<dbReference type="NCBIfam" id="NF011781">
    <property type="entry name" value="PRK15245.1"/>
    <property type="match status" value="1"/>
</dbReference>
<dbReference type="Pfam" id="PF03536">
    <property type="entry name" value="VRP3"/>
    <property type="match status" value="1"/>
</dbReference>
<dbReference type="PRINTS" id="PR01342">
    <property type="entry name" value="SALVRPPROT"/>
</dbReference>
<protein>
    <recommendedName>
        <fullName>Phosphothreonine lyase OspF</fullName>
        <ecNumber>4.2.3.-</ecNumber>
    </recommendedName>
    <alternativeName>
        <fullName>Effector protein OspF</fullName>
    </alternativeName>
</protein>